<proteinExistence type="evidence at transcript level"/>
<organism>
    <name type="scientific">Pongo abelii</name>
    <name type="common">Sumatran orangutan</name>
    <name type="synonym">Pongo pygmaeus abelii</name>
    <dbReference type="NCBI Taxonomy" id="9601"/>
    <lineage>
        <taxon>Eukaryota</taxon>
        <taxon>Metazoa</taxon>
        <taxon>Chordata</taxon>
        <taxon>Craniata</taxon>
        <taxon>Vertebrata</taxon>
        <taxon>Euteleostomi</taxon>
        <taxon>Mammalia</taxon>
        <taxon>Eutheria</taxon>
        <taxon>Euarchontoglires</taxon>
        <taxon>Primates</taxon>
        <taxon>Haplorrhini</taxon>
        <taxon>Catarrhini</taxon>
        <taxon>Hominidae</taxon>
        <taxon>Pongo</taxon>
    </lineage>
</organism>
<accession>Q5RAB0</accession>
<accession>Q5RDB3</accession>
<keyword id="KW-0143">Chaperone</keyword>
<keyword id="KW-0963">Cytoplasm</keyword>
<keyword id="KW-0488">Methylation</keyword>
<keyword id="KW-0539">Nucleus</keyword>
<keyword id="KW-0597">Phosphoprotein</keyword>
<keyword id="KW-1185">Reference proteome</keyword>
<keyword id="KW-0346">Stress response</keyword>
<comment type="function">
    <text evidence="3">Involved in the chaperone-assisted selective autophagy (CASA), a crucial process for protein quality control, particularly in mechanical strained cells and tissues such as muscle. Displays temperature-dependent chaperone activity.</text>
</comment>
<comment type="subunit">
    <text evidence="3 4">Monomer (By similarity). Forms a ternary complex with BAG3 and HSPA1A (By similarity). Component of the chaperone-assisted selective autophagy (CASA) complex consisting of BAG3, HSPA8/HSC70, HSPB8 and STUB1/CHIP (By similarity). Interacts with HSPB1 (By similarity). Interacts with DNAJB6 (By similarity). Interacts with BAG3 (By similarity).</text>
</comment>
<comment type="subcellular location">
    <subcellularLocation>
        <location evidence="4">Cytoplasm</location>
    </subcellularLocation>
    <subcellularLocation>
        <location evidence="4">Nucleus</location>
    </subcellularLocation>
    <text evidence="4">Translocates to nuclear foci during heat shock.</text>
</comment>
<comment type="PTM">
    <text evidence="1">Phosphorylated.</text>
</comment>
<comment type="similarity">
    <text evidence="5">Belongs to the small heat shock protein (HSP20) family.</text>
</comment>
<gene>
    <name type="primary">HSPB8</name>
</gene>
<feature type="chain" id="PRO_0000125948" description="Heat shock protein beta-8">
    <location>
        <begin position="1"/>
        <end position="196"/>
    </location>
</feature>
<feature type="domain" description="sHSP" evidence="5">
    <location>
        <begin position="74"/>
        <end position="185"/>
    </location>
</feature>
<feature type="region of interest" description="Disordered" evidence="6">
    <location>
        <begin position="176"/>
        <end position="196"/>
    </location>
</feature>
<feature type="compositionally biased region" description="Polar residues" evidence="6">
    <location>
        <begin position="177"/>
        <end position="196"/>
    </location>
</feature>
<feature type="modified residue" description="Phosphoserine" evidence="4">
    <location>
        <position position="24"/>
    </location>
</feature>
<feature type="modified residue" description="Phosphoserine" evidence="2">
    <location>
        <position position="57"/>
    </location>
</feature>
<feature type="modified residue" description="Phosphothreonine" evidence="4">
    <location>
        <position position="63"/>
    </location>
</feature>
<feature type="modified residue" description="Asymmetric dimethylarginine" evidence="3">
    <location>
        <position position="71"/>
    </location>
</feature>
<feature type="modified residue" description="Asymmetric dimethylarginine" evidence="3">
    <location>
        <position position="78"/>
    </location>
</feature>
<feature type="sequence conflict" description="In Ref. 1; CAH90244." evidence="7" ref="1">
    <original>D</original>
    <variation>G</variation>
    <location>
        <position position="116"/>
    </location>
</feature>
<name>HSPB8_PONAB</name>
<reference key="1">
    <citation type="submission" date="2004-11" db="EMBL/GenBank/DDBJ databases">
        <authorList>
            <consortium name="The German cDNA consortium"/>
        </authorList>
    </citation>
    <scope>NUCLEOTIDE SEQUENCE [LARGE SCALE MRNA]</scope>
    <source>
        <tissue>Heart</tissue>
    </source>
</reference>
<evidence type="ECO:0000250" key="1"/>
<evidence type="ECO:0000250" key="2">
    <source>
        <dbReference type="UniProtKB" id="Q9EPX0"/>
    </source>
</evidence>
<evidence type="ECO:0000250" key="3">
    <source>
        <dbReference type="UniProtKB" id="Q9JK92"/>
    </source>
</evidence>
<evidence type="ECO:0000250" key="4">
    <source>
        <dbReference type="UniProtKB" id="Q9UJY1"/>
    </source>
</evidence>
<evidence type="ECO:0000255" key="5">
    <source>
        <dbReference type="PROSITE-ProRule" id="PRU00285"/>
    </source>
</evidence>
<evidence type="ECO:0000256" key="6">
    <source>
        <dbReference type="SAM" id="MobiDB-lite"/>
    </source>
</evidence>
<evidence type="ECO:0000305" key="7"/>
<sequence>MADGQMPFSCHYPSRLRRDPFRDSPLSSRLLDDGFGMDPFPDDLTASWPDWALPRLSSAWPGTLRSGMVPRGPTATARFGVPAEGRTPPPFPGEPWKVCVNVHSFKPEELMVKTKDGYVEVSGKHEEKQQEGGIVSKNFTKKIQLPAEVDPVTVFASLSPEGLLIIEAPQVPPYSTFGESSFNNELPQDSQEVTCT</sequence>
<dbReference type="EMBL" id="CR858001">
    <property type="protein sequence ID" value="CAH90244.1"/>
    <property type="molecule type" value="mRNA"/>
</dbReference>
<dbReference type="EMBL" id="CR859108">
    <property type="protein sequence ID" value="CAH91300.1"/>
    <property type="molecule type" value="mRNA"/>
</dbReference>
<dbReference type="RefSeq" id="NP_001127400.1">
    <property type="nucleotide sequence ID" value="NM_001133928.2"/>
</dbReference>
<dbReference type="RefSeq" id="NP_001128773.1">
    <property type="nucleotide sequence ID" value="NM_001135301.1"/>
</dbReference>
<dbReference type="SMR" id="Q5RAB0"/>
<dbReference type="FunCoup" id="Q5RAB0">
    <property type="interactions" value="467"/>
</dbReference>
<dbReference type="Ensembl" id="ENSPPYT00000049540.1">
    <property type="protein sequence ID" value="ENSPPYP00000031943.1"/>
    <property type="gene ID" value="ENSPPYG00000041725.1"/>
</dbReference>
<dbReference type="GeneID" id="100174469"/>
<dbReference type="KEGG" id="pon:100174469"/>
<dbReference type="CTD" id="26353"/>
<dbReference type="GeneTree" id="ENSGT00940000160605"/>
<dbReference type="InParanoid" id="Q5RAB0"/>
<dbReference type="OMA" id="PCHYPSR"/>
<dbReference type="OrthoDB" id="10060792at2759"/>
<dbReference type="Proteomes" id="UP000001595">
    <property type="component" value="Chromosome 12"/>
</dbReference>
<dbReference type="GO" id="GO:0005737">
    <property type="term" value="C:cytoplasm"/>
    <property type="evidence" value="ECO:0000250"/>
    <property type="project" value="UniProtKB"/>
</dbReference>
<dbReference type="GO" id="GO:0005829">
    <property type="term" value="C:cytosol"/>
    <property type="evidence" value="ECO:0007669"/>
    <property type="project" value="Ensembl"/>
</dbReference>
<dbReference type="GO" id="GO:0005654">
    <property type="term" value="C:nucleoplasm"/>
    <property type="evidence" value="ECO:0007669"/>
    <property type="project" value="Ensembl"/>
</dbReference>
<dbReference type="GO" id="GO:0005634">
    <property type="term" value="C:nucleus"/>
    <property type="evidence" value="ECO:0000250"/>
    <property type="project" value="UniProtKB"/>
</dbReference>
<dbReference type="GO" id="GO:0101031">
    <property type="term" value="C:protein folding chaperone complex"/>
    <property type="evidence" value="ECO:0007669"/>
    <property type="project" value="Ensembl"/>
</dbReference>
<dbReference type="GO" id="GO:0042803">
    <property type="term" value="F:protein homodimerization activity"/>
    <property type="evidence" value="ECO:0007669"/>
    <property type="project" value="Ensembl"/>
</dbReference>
<dbReference type="GO" id="GO:0034620">
    <property type="term" value="P:cellular response to unfolded protein"/>
    <property type="evidence" value="ECO:0007669"/>
    <property type="project" value="Ensembl"/>
</dbReference>
<dbReference type="GO" id="GO:1905337">
    <property type="term" value="P:positive regulation of aggrephagy"/>
    <property type="evidence" value="ECO:0007669"/>
    <property type="project" value="Ensembl"/>
</dbReference>
<dbReference type="CDD" id="cd06480">
    <property type="entry name" value="ACD_HspB8_like"/>
    <property type="match status" value="1"/>
</dbReference>
<dbReference type="FunFam" id="2.60.40.790:FF:000028">
    <property type="entry name" value="Heat shock protein beta-8"/>
    <property type="match status" value="1"/>
</dbReference>
<dbReference type="Gene3D" id="2.60.40.790">
    <property type="match status" value="1"/>
</dbReference>
<dbReference type="InterPro" id="IPR002068">
    <property type="entry name" value="A-crystallin/Hsp20_dom"/>
</dbReference>
<dbReference type="InterPro" id="IPR001436">
    <property type="entry name" value="Alpha-crystallin/sHSP_animal"/>
</dbReference>
<dbReference type="InterPro" id="IPR008978">
    <property type="entry name" value="HSP20-like_chaperone"/>
</dbReference>
<dbReference type="InterPro" id="IPR043254">
    <property type="entry name" value="HSPB8"/>
</dbReference>
<dbReference type="InterPro" id="IPR042790">
    <property type="entry name" value="HspB8_ACD"/>
</dbReference>
<dbReference type="PANTHER" id="PTHR46906">
    <property type="entry name" value="HEAT SHOCK PROTEIN BETA-8"/>
    <property type="match status" value="1"/>
</dbReference>
<dbReference type="PANTHER" id="PTHR46906:SF1">
    <property type="entry name" value="HEAT SHOCK PROTEIN BETA-8"/>
    <property type="match status" value="1"/>
</dbReference>
<dbReference type="Pfam" id="PF00011">
    <property type="entry name" value="HSP20"/>
    <property type="match status" value="1"/>
</dbReference>
<dbReference type="PRINTS" id="PR00299">
    <property type="entry name" value="ACRYSTALLIN"/>
</dbReference>
<dbReference type="SUPFAM" id="SSF49764">
    <property type="entry name" value="HSP20-like chaperones"/>
    <property type="match status" value="1"/>
</dbReference>
<dbReference type="PROSITE" id="PS01031">
    <property type="entry name" value="SHSP"/>
    <property type="match status" value="1"/>
</dbReference>
<protein>
    <recommendedName>
        <fullName>Heat shock protein beta-8</fullName>
        <shortName>HspB8</shortName>
    </recommendedName>
</protein>